<sequence length="123" mass="13670">MIQVQTILSVADNSGARLVMCIKVLGGSRRRYAKISDIIKIAVKEAIPRAKVKKGEVLKAVIVRTKKNLHRSDGSVLRFDKNACVLLNDSTEQPIGTRIFGPVTRELRTEKFMKIISLAPEVL</sequence>
<proteinExistence type="inferred from homology"/>
<accession>Q8D202</accession>
<gene>
    <name evidence="1" type="primary">rplN</name>
    <name type="ordered locus">WIGBR5530</name>
</gene>
<comment type="function">
    <text evidence="1">Binds to 23S rRNA. Forms part of two intersubunit bridges in the 70S ribosome.</text>
</comment>
<comment type="subunit">
    <text evidence="1">Part of the 50S ribosomal subunit. Forms a cluster with proteins L3 and L19. In the 70S ribosome, L14 and L19 interact and together make contacts with the 16S rRNA in bridges B5 and B8.</text>
</comment>
<comment type="similarity">
    <text evidence="1">Belongs to the universal ribosomal protein uL14 family.</text>
</comment>
<organism>
    <name type="scientific">Wigglesworthia glossinidia brevipalpis</name>
    <dbReference type="NCBI Taxonomy" id="36870"/>
    <lineage>
        <taxon>Bacteria</taxon>
        <taxon>Pseudomonadati</taxon>
        <taxon>Pseudomonadota</taxon>
        <taxon>Gammaproteobacteria</taxon>
        <taxon>Enterobacterales</taxon>
        <taxon>Erwiniaceae</taxon>
        <taxon>Wigglesworthia</taxon>
    </lineage>
</organism>
<protein>
    <recommendedName>
        <fullName evidence="1">Large ribosomal subunit protein uL14</fullName>
    </recommendedName>
    <alternativeName>
        <fullName evidence="2">50S ribosomal protein L14</fullName>
    </alternativeName>
</protein>
<reference key="1">
    <citation type="journal article" date="2002" name="Nat. Genet.">
        <title>Genome sequence of the endocellular obligate symbiont of tsetse flies, Wigglesworthia glossinidia.</title>
        <authorList>
            <person name="Akman L."/>
            <person name="Yamashita A."/>
            <person name="Watanabe H."/>
            <person name="Oshima K."/>
            <person name="Shiba T."/>
            <person name="Hattori M."/>
            <person name="Aksoy S."/>
        </authorList>
    </citation>
    <scope>NUCLEOTIDE SEQUENCE [LARGE SCALE GENOMIC DNA]</scope>
</reference>
<name>RL14_WIGBR</name>
<dbReference type="EMBL" id="BA000021">
    <property type="protein sequence ID" value="BAC24699.1"/>
    <property type="molecule type" value="Genomic_DNA"/>
</dbReference>
<dbReference type="SMR" id="Q8D202"/>
<dbReference type="STRING" id="36870.gene:10369062"/>
<dbReference type="KEGG" id="wbr:rplN"/>
<dbReference type="eggNOG" id="COG0093">
    <property type="taxonomic scope" value="Bacteria"/>
</dbReference>
<dbReference type="HOGENOM" id="CLU_095071_2_1_6"/>
<dbReference type="OrthoDB" id="9806379at2"/>
<dbReference type="Proteomes" id="UP000000562">
    <property type="component" value="Chromosome"/>
</dbReference>
<dbReference type="GO" id="GO:0022625">
    <property type="term" value="C:cytosolic large ribosomal subunit"/>
    <property type="evidence" value="ECO:0007669"/>
    <property type="project" value="TreeGrafter"/>
</dbReference>
<dbReference type="GO" id="GO:0070180">
    <property type="term" value="F:large ribosomal subunit rRNA binding"/>
    <property type="evidence" value="ECO:0007669"/>
    <property type="project" value="TreeGrafter"/>
</dbReference>
<dbReference type="GO" id="GO:0003735">
    <property type="term" value="F:structural constituent of ribosome"/>
    <property type="evidence" value="ECO:0007669"/>
    <property type="project" value="InterPro"/>
</dbReference>
<dbReference type="GO" id="GO:0006412">
    <property type="term" value="P:translation"/>
    <property type="evidence" value="ECO:0007669"/>
    <property type="project" value="UniProtKB-UniRule"/>
</dbReference>
<dbReference type="CDD" id="cd00337">
    <property type="entry name" value="Ribosomal_uL14"/>
    <property type="match status" value="1"/>
</dbReference>
<dbReference type="FunFam" id="2.40.150.20:FF:000001">
    <property type="entry name" value="50S ribosomal protein L14"/>
    <property type="match status" value="1"/>
</dbReference>
<dbReference type="Gene3D" id="2.40.150.20">
    <property type="entry name" value="Ribosomal protein L14"/>
    <property type="match status" value="1"/>
</dbReference>
<dbReference type="HAMAP" id="MF_01367">
    <property type="entry name" value="Ribosomal_uL14"/>
    <property type="match status" value="1"/>
</dbReference>
<dbReference type="InterPro" id="IPR000218">
    <property type="entry name" value="Ribosomal_uL14"/>
</dbReference>
<dbReference type="InterPro" id="IPR005745">
    <property type="entry name" value="Ribosomal_uL14_bac-type"/>
</dbReference>
<dbReference type="InterPro" id="IPR019972">
    <property type="entry name" value="Ribosomal_uL14_CS"/>
</dbReference>
<dbReference type="InterPro" id="IPR036853">
    <property type="entry name" value="Ribosomal_uL14_sf"/>
</dbReference>
<dbReference type="NCBIfam" id="TIGR01067">
    <property type="entry name" value="rplN_bact"/>
    <property type="match status" value="1"/>
</dbReference>
<dbReference type="PANTHER" id="PTHR11761">
    <property type="entry name" value="50S/60S RIBOSOMAL PROTEIN L14/L23"/>
    <property type="match status" value="1"/>
</dbReference>
<dbReference type="PANTHER" id="PTHR11761:SF3">
    <property type="entry name" value="LARGE RIBOSOMAL SUBUNIT PROTEIN UL14M"/>
    <property type="match status" value="1"/>
</dbReference>
<dbReference type="Pfam" id="PF00238">
    <property type="entry name" value="Ribosomal_L14"/>
    <property type="match status" value="1"/>
</dbReference>
<dbReference type="SMART" id="SM01374">
    <property type="entry name" value="Ribosomal_L14"/>
    <property type="match status" value="1"/>
</dbReference>
<dbReference type="SUPFAM" id="SSF50193">
    <property type="entry name" value="Ribosomal protein L14"/>
    <property type="match status" value="1"/>
</dbReference>
<dbReference type="PROSITE" id="PS00049">
    <property type="entry name" value="RIBOSOMAL_L14"/>
    <property type="match status" value="1"/>
</dbReference>
<feature type="chain" id="PRO_1000055752" description="Large ribosomal subunit protein uL14">
    <location>
        <begin position="1"/>
        <end position="123"/>
    </location>
</feature>
<evidence type="ECO:0000255" key="1">
    <source>
        <dbReference type="HAMAP-Rule" id="MF_01367"/>
    </source>
</evidence>
<evidence type="ECO:0000305" key="2"/>
<keyword id="KW-1185">Reference proteome</keyword>
<keyword id="KW-0687">Ribonucleoprotein</keyword>
<keyword id="KW-0689">Ribosomal protein</keyword>
<keyword id="KW-0694">RNA-binding</keyword>
<keyword id="KW-0699">rRNA-binding</keyword>